<organism>
    <name type="scientific">Streptococcus pyogenes serotype M4 (strain MGAS10750)</name>
    <dbReference type="NCBI Taxonomy" id="370554"/>
    <lineage>
        <taxon>Bacteria</taxon>
        <taxon>Bacillati</taxon>
        <taxon>Bacillota</taxon>
        <taxon>Bacilli</taxon>
        <taxon>Lactobacillales</taxon>
        <taxon>Streptococcaceae</taxon>
        <taxon>Streptococcus</taxon>
    </lineage>
</organism>
<evidence type="ECO:0000255" key="1">
    <source>
        <dbReference type="HAMAP-Rule" id="MF_00412"/>
    </source>
</evidence>
<keyword id="KW-0028">Amino-acid biosynthesis</keyword>
<keyword id="KW-0963">Cytoplasm</keyword>
<keyword id="KW-0521">NADP</keyword>
<keyword id="KW-0560">Oxidoreductase</keyword>
<keyword id="KW-0641">Proline biosynthesis</keyword>
<sequence length="416" mass="45503">MTDMRRLGQRAKQASLLIAPLSTQIKNRFLSTLAKVLVDDTQTLLAANQKDLANAKEHGISDIMMDRLRLTSERIKAIAQGVQQVADLADPIGQVIKGYTNLNGLKILQKRVPLGVIAMIFESRPNVSVDAFSLAFKTNNAIILRGGKDALYSNKALVKLIRQSLEESGITPDAVQLVEDPSHAVAEELMQATDYVDVLIPRGGARLIQTVKEKAKVPVIETGVGNVHIYVDAQADLDMATKIVINAKTKRPSVCNAAEGLVIHEAVAARFIPMLEKAINQVQPVEWRADDKALPLFEQAVPAKAEDFETEFLDYIMSVKVVSSLEEAISWINQHTSHHSEAIITRDIKAAETFQDLVDAAAVYVNASTRFTDGFVFGLGAEIGISTQKMHARGPMGLEALTSTKFYINGDGHIRE</sequence>
<comment type="function">
    <text evidence="1">Catalyzes the NADPH-dependent reduction of L-glutamate 5-phosphate into L-glutamate 5-semialdehyde and phosphate. The product spontaneously undergoes cyclization to form 1-pyrroline-5-carboxylate.</text>
</comment>
<comment type="catalytic activity">
    <reaction evidence="1">
        <text>L-glutamate 5-semialdehyde + phosphate + NADP(+) = L-glutamyl 5-phosphate + NADPH + H(+)</text>
        <dbReference type="Rhea" id="RHEA:19541"/>
        <dbReference type="ChEBI" id="CHEBI:15378"/>
        <dbReference type="ChEBI" id="CHEBI:43474"/>
        <dbReference type="ChEBI" id="CHEBI:57783"/>
        <dbReference type="ChEBI" id="CHEBI:58066"/>
        <dbReference type="ChEBI" id="CHEBI:58274"/>
        <dbReference type="ChEBI" id="CHEBI:58349"/>
        <dbReference type="EC" id="1.2.1.41"/>
    </reaction>
</comment>
<comment type="pathway">
    <text evidence="1">Amino-acid biosynthesis; L-proline biosynthesis; L-glutamate 5-semialdehyde from L-glutamate: step 2/2.</text>
</comment>
<comment type="subcellular location">
    <subcellularLocation>
        <location evidence="1">Cytoplasm</location>
    </subcellularLocation>
</comment>
<comment type="similarity">
    <text evidence="1">Belongs to the gamma-glutamyl phosphate reductase family.</text>
</comment>
<proteinExistence type="inferred from homology"/>
<reference key="1">
    <citation type="journal article" date="2006" name="Proc. Natl. Acad. Sci. U.S.A.">
        <title>Molecular genetic anatomy of inter- and intraserotype variation in the human bacterial pathogen group A Streptococcus.</title>
        <authorList>
            <person name="Beres S.B."/>
            <person name="Richter E.W."/>
            <person name="Nagiec M.J."/>
            <person name="Sumby P."/>
            <person name="Porcella S.F."/>
            <person name="DeLeo F.R."/>
            <person name="Musser J.M."/>
        </authorList>
    </citation>
    <scope>NUCLEOTIDE SEQUENCE [LARGE SCALE GENOMIC DNA]</scope>
    <source>
        <strain>MGAS10750</strain>
    </source>
</reference>
<dbReference type="EC" id="1.2.1.41" evidence="1"/>
<dbReference type="EMBL" id="CP000262">
    <property type="protein sequence ID" value="ABF38430.1"/>
    <property type="molecule type" value="Genomic_DNA"/>
</dbReference>
<dbReference type="SMR" id="Q1J5F6"/>
<dbReference type="KEGG" id="spi:MGAS10750_Spy1480"/>
<dbReference type="HOGENOM" id="CLU_030231_0_0_9"/>
<dbReference type="UniPathway" id="UPA00098">
    <property type="reaction ID" value="UER00360"/>
</dbReference>
<dbReference type="Proteomes" id="UP000002434">
    <property type="component" value="Chromosome"/>
</dbReference>
<dbReference type="GO" id="GO:0005737">
    <property type="term" value="C:cytoplasm"/>
    <property type="evidence" value="ECO:0007669"/>
    <property type="project" value="UniProtKB-SubCell"/>
</dbReference>
<dbReference type="GO" id="GO:0004350">
    <property type="term" value="F:glutamate-5-semialdehyde dehydrogenase activity"/>
    <property type="evidence" value="ECO:0007669"/>
    <property type="project" value="UniProtKB-UniRule"/>
</dbReference>
<dbReference type="GO" id="GO:0050661">
    <property type="term" value="F:NADP binding"/>
    <property type="evidence" value="ECO:0007669"/>
    <property type="project" value="InterPro"/>
</dbReference>
<dbReference type="GO" id="GO:0055129">
    <property type="term" value="P:L-proline biosynthetic process"/>
    <property type="evidence" value="ECO:0007669"/>
    <property type="project" value="UniProtKB-UniRule"/>
</dbReference>
<dbReference type="CDD" id="cd07079">
    <property type="entry name" value="ALDH_F18-19_ProA-GPR"/>
    <property type="match status" value="1"/>
</dbReference>
<dbReference type="FunFam" id="3.40.309.10:FF:000006">
    <property type="entry name" value="Gamma-glutamyl phosphate reductase"/>
    <property type="match status" value="1"/>
</dbReference>
<dbReference type="Gene3D" id="3.40.605.10">
    <property type="entry name" value="Aldehyde Dehydrogenase, Chain A, domain 1"/>
    <property type="match status" value="1"/>
</dbReference>
<dbReference type="Gene3D" id="3.40.309.10">
    <property type="entry name" value="Aldehyde Dehydrogenase, Chain A, domain 2"/>
    <property type="match status" value="1"/>
</dbReference>
<dbReference type="HAMAP" id="MF_00412">
    <property type="entry name" value="ProA"/>
    <property type="match status" value="1"/>
</dbReference>
<dbReference type="InterPro" id="IPR016161">
    <property type="entry name" value="Ald_DH/histidinol_DH"/>
</dbReference>
<dbReference type="InterPro" id="IPR016163">
    <property type="entry name" value="Ald_DH_C"/>
</dbReference>
<dbReference type="InterPro" id="IPR016162">
    <property type="entry name" value="Ald_DH_N"/>
</dbReference>
<dbReference type="InterPro" id="IPR015590">
    <property type="entry name" value="Aldehyde_DH_dom"/>
</dbReference>
<dbReference type="InterPro" id="IPR020593">
    <property type="entry name" value="G-glutamylP_reductase_CS"/>
</dbReference>
<dbReference type="InterPro" id="IPR012134">
    <property type="entry name" value="Glu-5-SA_DH"/>
</dbReference>
<dbReference type="InterPro" id="IPR000965">
    <property type="entry name" value="GPR_dom"/>
</dbReference>
<dbReference type="NCBIfam" id="NF001221">
    <property type="entry name" value="PRK00197.1"/>
    <property type="match status" value="1"/>
</dbReference>
<dbReference type="NCBIfam" id="TIGR00407">
    <property type="entry name" value="proA"/>
    <property type="match status" value="1"/>
</dbReference>
<dbReference type="PANTHER" id="PTHR11063:SF8">
    <property type="entry name" value="DELTA-1-PYRROLINE-5-CARBOXYLATE SYNTHASE"/>
    <property type="match status" value="1"/>
</dbReference>
<dbReference type="PANTHER" id="PTHR11063">
    <property type="entry name" value="GLUTAMATE SEMIALDEHYDE DEHYDROGENASE"/>
    <property type="match status" value="1"/>
</dbReference>
<dbReference type="Pfam" id="PF00171">
    <property type="entry name" value="Aldedh"/>
    <property type="match status" value="2"/>
</dbReference>
<dbReference type="PIRSF" id="PIRSF000151">
    <property type="entry name" value="GPR"/>
    <property type="match status" value="1"/>
</dbReference>
<dbReference type="SUPFAM" id="SSF53720">
    <property type="entry name" value="ALDH-like"/>
    <property type="match status" value="1"/>
</dbReference>
<dbReference type="PROSITE" id="PS01223">
    <property type="entry name" value="PROA"/>
    <property type="match status" value="1"/>
</dbReference>
<gene>
    <name evidence="1" type="primary">proA</name>
    <name type="ordered locus">MGAS10750_Spy1480</name>
</gene>
<accession>Q1J5F6</accession>
<name>PROA_STRPF</name>
<protein>
    <recommendedName>
        <fullName evidence="1">Gamma-glutamyl phosphate reductase</fullName>
        <shortName evidence="1">GPR</shortName>
        <ecNumber evidence="1">1.2.1.41</ecNumber>
    </recommendedName>
    <alternativeName>
        <fullName evidence="1">Glutamate-5-semialdehyde dehydrogenase</fullName>
    </alternativeName>
    <alternativeName>
        <fullName evidence="1">Glutamyl-gamma-semialdehyde dehydrogenase</fullName>
        <shortName evidence="1">GSA dehydrogenase</shortName>
    </alternativeName>
</protein>
<feature type="chain" id="PRO_0000252597" description="Gamma-glutamyl phosphate reductase">
    <location>
        <begin position="1"/>
        <end position="416"/>
    </location>
</feature>